<keyword id="KW-0025">Alternative splicing</keyword>
<keyword id="KW-0175">Coiled coil</keyword>
<keyword id="KW-0238">DNA-binding</keyword>
<keyword id="KW-0539">Nucleus</keyword>
<keyword id="KW-1185">Reference proteome</keyword>
<keyword id="KW-0804">Transcription</keyword>
<keyword id="KW-0805">Transcription regulation</keyword>
<dbReference type="EMBL" id="AY143172">
    <property type="protein sequence ID" value="AAN37407.1"/>
    <property type="molecule type" value="mRNA"/>
</dbReference>
<dbReference type="EMBL" id="AC011809">
    <property type="protein sequence ID" value="AAF27105.1"/>
    <property type="status" value="ALT_SEQ"/>
    <property type="molecule type" value="Genomic_DNA"/>
</dbReference>
<dbReference type="EMBL" id="CP002684">
    <property type="protein sequence ID" value="AEE29758.1"/>
    <property type="molecule type" value="Genomic_DNA"/>
</dbReference>
<dbReference type="EMBL" id="CP002684">
    <property type="protein sequence ID" value="ANM59116.1"/>
    <property type="molecule type" value="Genomic_DNA"/>
</dbReference>
<dbReference type="EMBL" id="AB094116">
    <property type="protein sequence ID" value="BAC99091.1"/>
    <property type="molecule type" value="mRNA"/>
</dbReference>
<dbReference type="PIR" id="D86321">
    <property type="entry name" value="D86321"/>
</dbReference>
<dbReference type="RefSeq" id="NP_001321506.1">
    <molecule id="Q7X9I0-2"/>
    <property type="nucleotide sequence ID" value="NM_001332367.1"/>
</dbReference>
<dbReference type="RefSeq" id="NP_173310.2">
    <molecule id="Q7X9I0-1"/>
    <property type="nucleotide sequence ID" value="NM_101733.6"/>
</dbReference>
<dbReference type="SMR" id="Q7X9I0"/>
<dbReference type="FunCoup" id="Q7X9I0">
    <property type="interactions" value="75"/>
</dbReference>
<dbReference type="IntAct" id="Q7X9I0">
    <property type="interactions" value="8"/>
</dbReference>
<dbReference type="STRING" id="3702.Q7X9I0"/>
<dbReference type="PaxDb" id="3702-AT1G18750.1"/>
<dbReference type="ProteomicsDB" id="244774">
    <molecule id="Q7X9I0-1"/>
</dbReference>
<dbReference type="EnsemblPlants" id="AT1G18750.1">
    <molecule id="Q7X9I0-1"/>
    <property type="protein sequence ID" value="AT1G18750.1"/>
    <property type="gene ID" value="AT1G18750"/>
</dbReference>
<dbReference type="EnsemblPlants" id="AT1G18750.4">
    <molecule id="Q7X9I0-2"/>
    <property type="protein sequence ID" value="AT1G18750.4"/>
    <property type="gene ID" value="AT1G18750"/>
</dbReference>
<dbReference type="GeneID" id="838457"/>
<dbReference type="Gramene" id="AT1G18750.1">
    <molecule id="Q7X9I0-1"/>
    <property type="protein sequence ID" value="AT1G18750.1"/>
    <property type="gene ID" value="AT1G18750"/>
</dbReference>
<dbReference type="Gramene" id="AT1G18750.4">
    <molecule id="Q7X9I0-2"/>
    <property type="protein sequence ID" value="AT1G18750.4"/>
    <property type="gene ID" value="AT1G18750"/>
</dbReference>
<dbReference type="KEGG" id="ath:AT1G18750"/>
<dbReference type="Araport" id="AT1G18750"/>
<dbReference type="TAIR" id="AT1G18750">
    <property type="gene designation" value="AGL65"/>
</dbReference>
<dbReference type="eggNOG" id="KOG0014">
    <property type="taxonomic scope" value="Eukaryota"/>
</dbReference>
<dbReference type="HOGENOM" id="CLU_034796_0_0_1"/>
<dbReference type="InParanoid" id="Q7X9I0"/>
<dbReference type="OrthoDB" id="1898716at2759"/>
<dbReference type="PhylomeDB" id="Q7X9I0"/>
<dbReference type="PRO" id="PR:Q7X9I0"/>
<dbReference type="Proteomes" id="UP000006548">
    <property type="component" value="Chromosome 1"/>
</dbReference>
<dbReference type="ExpressionAtlas" id="Q7X9I0">
    <property type="expression patterns" value="baseline and differential"/>
</dbReference>
<dbReference type="GO" id="GO:0005634">
    <property type="term" value="C:nucleus"/>
    <property type="evidence" value="ECO:0007669"/>
    <property type="project" value="UniProtKB-SubCell"/>
</dbReference>
<dbReference type="GO" id="GO:0000987">
    <property type="term" value="F:cis-regulatory region sequence-specific DNA binding"/>
    <property type="evidence" value="ECO:0007669"/>
    <property type="project" value="InterPro"/>
</dbReference>
<dbReference type="GO" id="GO:0003700">
    <property type="term" value="F:DNA-binding transcription factor activity"/>
    <property type="evidence" value="ECO:0000250"/>
    <property type="project" value="TAIR"/>
</dbReference>
<dbReference type="GO" id="GO:0000981">
    <property type="term" value="F:DNA-binding transcription factor activity, RNA polymerase II-specific"/>
    <property type="evidence" value="ECO:0007669"/>
    <property type="project" value="InterPro"/>
</dbReference>
<dbReference type="GO" id="GO:0046983">
    <property type="term" value="F:protein dimerization activity"/>
    <property type="evidence" value="ECO:0007669"/>
    <property type="project" value="InterPro"/>
</dbReference>
<dbReference type="GO" id="GO:0009555">
    <property type="term" value="P:pollen development"/>
    <property type="evidence" value="ECO:0000316"/>
    <property type="project" value="TAIR"/>
</dbReference>
<dbReference type="GO" id="GO:0010152">
    <property type="term" value="P:pollen maturation"/>
    <property type="evidence" value="ECO:0000315"/>
    <property type="project" value="UniProtKB"/>
</dbReference>
<dbReference type="GO" id="GO:0045944">
    <property type="term" value="P:positive regulation of transcription by RNA polymerase II"/>
    <property type="evidence" value="ECO:0007669"/>
    <property type="project" value="InterPro"/>
</dbReference>
<dbReference type="GO" id="GO:0080092">
    <property type="term" value="P:regulation of pollen tube growth"/>
    <property type="evidence" value="ECO:0000315"/>
    <property type="project" value="UniProtKB"/>
</dbReference>
<dbReference type="CDD" id="cd00266">
    <property type="entry name" value="MADS_SRF_like"/>
    <property type="match status" value="1"/>
</dbReference>
<dbReference type="FunFam" id="3.40.1810.10:FF:000010">
    <property type="entry name" value="Agamous-like MADS-box protein AGL30"/>
    <property type="match status" value="1"/>
</dbReference>
<dbReference type="Gene3D" id="3.40.1810.10">
    <property type="entry name" value="Transcription factor, MADS-box"/>
    <property type="match status" value="1"/>
</dbReference>
<dbReference type="InterPro" id="IPR050142">
    <property type="entry name" value="MADS-box/MEF2_TF"/>
</dbReference>
<dbReference type="InterPro" id="IPR033897">
    <property type="entry name" value="SRF-like_MADS-box"/>
</dbReference>
<dbReference type="InterPro" id="IPR002100">
    <property type="entry name" value="TF_MADSbox"/>
</dbReference>
<dbReference type="InterPro" id="IPR036879">
    <property type="entry name" value="TF_MADSbox_sf"/>
</dbReference>
<dbReference type="PANTHER" id="PTHR48019">
    <property type="entry name" value="SERUM RESPONSE FACTOR HOMOLOG"/>
    <property type="match status" value="1"/>
</dbReference>
<dbReference type="Pfam" id="PF00319">
    <property type="entry name" value="SRF-TF"/>
    <property type="match status" value="1"/>
</dbReference>
<dbReference type="PRINTS" id="PR00404">
    <property type="entry name" value="MADSDOMAIN"/>
</dbReference>
<dbReference type="SMART" id="SM00432">
    <property type="entry name" value="MADS"/>
    <property type="match status" value="1"/>
</dbReference>
<dbReference type="SUPFAM" id="SSF55455">
    <property type="entry name" value="SRF-like"/>
    <property type="match status" value="1"/>
</dbReference>
<dbReference type="PROSITE" id="PS50066">
    <property type="entry name" value="MADS_BOX_2"/>
    <property type="match status" value="1"/>
</dbReference>
<gene>
    <name evidence="6" type="primary">AGL65</name>
    <name evidence="8" type="ordered locus">At1g18750</name>
    <name evidence="9" type="ORF">F6A14.14</name>
</gene>
<feature type="chain" id="PRO_0000433967" description="Agamous-like MADS-box protein AGL65">
    <location>
        <begin position="1"/>
        <end position="389"/>
    </location>
</feature>
<feature type="domain" description="MADS-box" evidence="2">
    <location>
        <begin position="1"/>
        <end position="61"/>
    </location>
</feature>
<feature type="region of interest" description="Disordered" evidence="3">
    <location>
        <begin position="310"/>
        <end position="343"/>
    </location>
</feature>
<feature type="coiled-coil region" evidence="1">
    <location>
        <begin position="77"/>
        <end position="131"/>
    </location>
</feature>
<feature type="coiled-coil region" evidence="1">
    <location>
        <begin position="293"/>
        <end position="325"/>
    </location>
</feature>
<feature type="compositionally biased region" description="Low complexity" evidence="3">
    <location>
        <begin position="312"/>
        <end position="324"/>
    </location>
</feature>
<feature type="splice variant" id="VSP_057857" description="In isoform 2.">
    <original>VCVFTPPLELSR</original>
    <variation>QPN</variation>
    <location>
        <begin position="378"/>
        <end position="389"/>
    </location>
</feature>
<organism>
    <name type="scientific">Arabidopsis thaliana</name>
    <name type="common">Mouse-ear cress</name>
    <dbReference type="NCBI Taxonomy" id="3702"/>
    <lineage>
        <taxon>Eukaryota</taxon>
        <taxon>Viridiplantae</taxon>
        <taxon>Streptophyta</taxon>
        <taxon>Embryophyta</taxon>
        <taxon>Tracheophyta</taxon>
        <taxon>Spermatophyta</taxon>
        <taxon>Magnoliopsida</taxon>
        <taxon>eudicotyledons</taxon>
        <taxon>Gunneridae</taxon>
        <taxon>Pentapetalae</taxon>
        <taxon>rosids</taxon>
        <taxon>malvids</taxon>
        <taxon>Brassicales</taxon>
        <taxon>Brassicaceae</taxon>
        <taxon>Camelineae</taxon>
        <taxon>Arabidopsis</taxon>
    </lineage>
</organism>
<reference key="1">
    <citation type="journal article" date="2003" name="Plant Cell">
        <title>Molecular and phylogenetic analyses of the complete MADS-box transcription factor family in Arabidopsis: new openings to the MADS world.</title>
        <authorList>
            <person name="Parenicova L."/>
            <person name="de Folter S."/>
            <person name="Kieffer M."/>
            <person name="Horner D.S."/>
            <person name="Favalli C."/>
            <person name="Busscher J."/>
            <person name="Cook H.E."/>
            <person name="Ingram R.M."/>
            <person name="Kater M.M."/>
            <person name="Davies B."/>
            <person name="Angenent G.C."/>
            <person name="Colombo L."/>
        </authorList>
    </citation>
    <scope>NUCLEOTIDE SEQUENCE [MRNA] (ISOFORM 1)</scope>
    <scope>GENE FAMILY</scope>
    <scope>NOMENCLATURE</scope>
    <source>
        <strain>cv. Columbia</strain>
        <tissue>Flower</tissue>
    </source>
</reference>
<reference key="2">
    <citation type="journal article" date="2000" name="Nature">
        <title>Sequence and analysis of chromosome 1 of the plant Arabidopsis thaliana.</title>
        <authorList>
            <person name="Theologis A."/>
            <person name="Ecker J.R."/>
            <person name="Palm C.J."/>
            <person name="Federspiel N.A."/>
            <person name="Kaul S."/>
            <person name="White O."/>
            <person name="Alonso J."/>
            <person name="Altafi H."/>
            <person name="Araujo R."/>
            <person name="Bowman C.L."/>
            <person name="Brooks S.Y."/>
            <person name="Buehler E."/>
            <person name="Chan A."/>
            <person name="Chao Q."/>
            <person name="Chen H."/>
            <person name="Cheuk R.F."/>
            <person name="Chin C.W."/>
            <person name="Chung M.K."/>
            <person name="Conn L."/>
            <person name="Conway A.B."/>
            <person name="Conway A.R."/>
            <person name="Creasy T.H."/>
            <person name="Dewar K."/>
            <person name="Dunn P."/>
            <person name="Etgu P."/>
            <person name="Feldblyum T.V."/>
            <person name="Feng J.-D."/>
            <person name="Fong B."/>
            <person name="Fujii C.Y."/>
            <person name="Gill J.E."/>
            <person name="Goldsmith A.D."/>
            <person name="Haas B."/>
            <person name="Hansen N.F."/>
            <person name="Hughes B."/>
            <person name="Huizar L."/>
            <person name="Hunter J.L."/>
            <person name="Jenkins J."/>
            <person name="Johnson-Hopson C."/>
            <person name="Khan S."/>
            <person name="Khaykin E."/>
            <person name="Kim C.J."/>
            <person name="Koo H.L."/>
            <person name="Kremenetskaia I."/>
            <person name="Kurtz D.B."/>
            <person name="Kwan A."/>
            <person name="Lam B."/>
            <person name="Langin-Hooper S."/>
            <person name="Lee A."/>
            <person name="Lee J.M."/>
            <person name="Lenz C.A."/>
            <person name="Li J.H."/>
            <person name="Li Y.-P."/>
            <person name="Lin X."/>
            <person name="Liu S.X."/>
            <person name="Liu Z.A."/>
            <person name="Luros J.S."/>
            <person name="Maiti R."/>
            <person name="Marziali A."/>
            <person name="Militscher J."/>
            <person name="Miranda M."/>
            <person name="Nguyen M."/>
            <person name="Nierman W.C."/>
            <person name="Osborne B.I."/>
            <person name="Pai G."/>
            <person name="Peterson J."/>
            <person name="Pham P.K."/>
            <person name="Rizzo M."/>
            <person name="Rooney T."/>
            <person name="Rowley D."/>
            <person name="Sakano H."/>
            <person name="Salzberg S.L."/>
            <person name="Schwartz J.R."/>
            <person name="Shinn P."/>
            <person name="Southwick A.M."/>
            <person name="Sun H."/>
            <person name="Tallon L.J."/>
            <person name="Tambunga G."/>
            <person name="Toriumi M.J."/>
            <person name="Town C.D."/>
            <person name="Utterback T."/>
            <person name="Van Aken S."/>
            <person name="Vaysberg M."/>
            <person name="Vysotskaia V.S."/>
            <person name="Walker M."/>
            <person name="Wu D."/>
            <person name="Yu G."/>
            <person name="Fraser C.M."/>
            <person name="Venter J.C."/>
            <person name="Davis R.W."/>
        </authorList>
    </citation>
    <scope>NUCLEOTIDE SEQUENCE [LARGE SCALE GENOMIC DNA]</scope>
    <source>
        <strain>cv. Columbia</strain>
    </source>
</reference>
<reference key="3">
    <citation type="journal article" date="2017" name="Plant J.">
        <title>Araport11: a complete reannotation of the Arabidopsis thaliana reference genome.</title>
        <authorList>
            <person name="Cheng C.Y."/>
            <person name="Krishnakumar V."/>
            <person name="Chan A.P."/>
            <person name="Thibaud-Nissen F."/>
            <person name="Schobel S."/>
            <person name="Town C.D."/>
        </authorList>
    </citation>
    <scope>GENOME REANNOTATION</scope>
    <source>
        <strain>cv. Columbia</strain>
    </source>
</reference>
<reference key="4">
    <citation type="journal article" date="2003" name="Mol. Biol. Evol.">
        <title>Evolution and divergence of the MADS-box gene family based on genome-wide expression analyses.</title>
        <authorList>
            <person name="Kofuji R."/>
            <person name="Sumikawa N."/>
            <person name="Yamasaki M."/>
            <person name="Kondo K."/>
            <person name="Ueda K."/>
            <person name="Ito M."/>
            <person name="Hasebe M."/>
        </authorList>
    </citation>
    <scope>NUCLEOTIDE SEQUENCE [MRNA] OF 23-380 (ISOFORM 2)</scope>
    <scope>TISSUE SPECIFICITY</scope>
    <source>
        <strain>cv. Columbia</strain>
    </source>
</reference>
<reference key="5">
    <citation type="journal article" date="2009" name="Plant Physiol.">
        <title>MIKC* MADS domain heterodimers are required for pollen maturation and tube growth in Arabidopsis.</title>
        <authorList>
            <person name="Adamczyk B.J."/>
            <person name="Fernandez D.E."/>
        </authorList>
    </citation>
    <scope>FUNCTION</scope>
    <scope>INTERACTION WITH AGL104</scope>
</reference>
<protein>
    <recommendedName>
        <fullName evidence="7">Agamous-like MADS-box protein AGL65</fullName>
    </recommendedName>
</protein>
<sequence length="389" mass="44877">MGRVKLKIKRLESTSNRQVTYTKRKNGILKKAKELSILCDIDIVLLMFSPTGRATAFHGEHSCIEEVISKFAQLTPQERTKRKLESLEALKKTFKKLDHDVNIHDFLGARNQTIEGLSNQVAIYQAQLMECHRRLSCWTNIDRIENTEHLDLLEESLRKSIERIQIHKEHYRKNQLLPIECATTQFHSGIQLPMAMGGNSSMQEAHSMSWLPDNDHQQTILPGDSSFLPHREMDGSIPVYSSCFFESTKPEDQICSNPGQQFEQLEQQGNGCLGLQQLGEEYSYPTPFGTTLGMEEDQEKKIKSEMELNNLQQQQQQQQQQQQQDPSMYDPMANNNGGCFQIPHDQSMFVNDHHHHHHHHHQNWVPDSMFGQTSYNQVCVFTPPLELSR</sequence>
<proteinExistence type="evidence at protein level"/>
<evidence type="ECO:0000255" key="1"/>
<evidence type="ECO:0000255" key="2">
    <source>
        <dbReference type="PROSITE-ProRule" id="PRU00251"/>
    </source>
</evidence>
<evidence type="ECO:0000256" key="3">
    <source>
        <dbReference type="SAM" id="MobiDB-lite"/>
    </source>
</evidence>
<evidence type="ECO:0000269" key="4">
    <source>
    </source>
</evidence>
<evidence type="ECO:0000269" key="5">
    <source>
    </source>
</evidence>
<evidence type="ECO:0000303" key="6">
    <source>
    </source>
</evidence>
<evidence type="ECO:0000305" key="7"/>
<evidence type="ECO:0000312" key="8">
    <source>
        <dbReference type="Araport" id="AT1G18750"/>
    </source>
</evidence>
<evidence type="ECO:0000312" key="9">
    <source>
        <dbReference type="EMBL" id="AAF27105.1"/>
    </source>
</evidence>
<accession>Q7X9I0</accession>
<accession>Q76K80</accession>
<accession>Q9M9U6</accession>
<name>AGL65_ARATH</name>
<comment type="function">
    <text evidence="5">Probable transcription factor that forms a heterodimer with the MADS-box protein AGL104 and is involved in the regulation of pollen maturation at the late stages of pollen development and pollen tube growth.</text>
</comment>
<comment type="subunit">
    <text evidence="5">Forms a heterodimer with AGL104.</text>
</comment>
<comment type="interaction">
    <interactant intactId="EBI-622332">
        <id>Q7X9I0</id>
    </interactant>
    <interactant intactId="EBI-15194999">
        <id>Q9LM46</id>
        <label>AGL104</label>
    </interactant>
    <organismsDiffer>false</organismsDiffer>
    <experiments>3</experiments>
</comment>
<comment type="subcellular location">
    <subcellularLocation>
        <location evidence="2">Nucleus</location>
    </subcellularLocation>
</comment>
<comment type="alternative products">
    <event type="alternative splicing"/>
    <isoform>
        <id>Q7X9I0-1</id>
        <name>1</name>
        <sequence type="displayed"/>
    </isoform>
    <isoform>
        <id>Q7X9I0-2</id>
        <name>2</name>
        <sequence type="described" ref="VSP_057857"/>
    </isoform>
</comment>
<comment type="tissue specificity">
    <text evidence="4">Expressed in pollen.</text>
</comment>
<comment type="sequence caution" evidence="7">
    <conflict type="erroneous gene model prediction">
        <sequence resource="EMBL-CDS" id="AAF27105"/>
    </conflict>
</comment>